<sequence>MTEIQKLTNNKEIIAYLAEKFPLCFSLEGEAKPLKIGLFQDLAEALANDEKVSKTQLRQALRQYTSNWRYLHGCRAGAVRVDLNGEPAGILEQEHVEHAAAKLAEAKAKVAERRAVEKANNPKANKKRSVYHSGNKSENKKSAGKKFSKPRQVEQIFVNVDLANLQKGDVVRVKAGDKTTKAEILEVVKEGARVELENGLILTVSADRLFA</sequence>
<comment type="function">
    <text evidence="1">RNA chaperone with significant RNA binding, RNA strand exchange and RNA duplexing activities.</text>
</comment>
<comment type="subcellular location">
    <subcellularLocation>
        <location evidence="1">Cytoplasm</location>
    </subcellularLocation>
</comment>
<comment type="similarity">
    <text evidence="1">Belongs to the ProQ family.</text>
</comment>
<protein>
    <recommendedName>
        <fullName evidence="1">RNA chaperone ProQ</fullName>
    </recommendedName>
</protein>
<name>PROQ_HISS1</name>
<feature type="chain" id="PRO_0000303090" description="RNA chaperone ProQ">
    <location>
        <begin position="1"/>
        <end position="211"/>
    </location>
</feature>
<feature type="region of interest" description="Disordered" evidence="2">
    <location>
        <begin position="113"/>
        <end position="147"/>
    </location>
</feature>
<keyword id="KW-0143">Chaperone</keyword>
<keyword id="KW-0963">Cytoplasm</keyword>
<keyword id="KW-0694">RNA-binding</keyword>
<accession>Q0I476</accession>
<gene>
    <name evidence="1" type="primary">proQ</name>
    <name type="ordered locus">HS_1070</name>
</gene>
<reference key="1">
    <citation type="journal article" date="2007" name="J. Bacteriol.">
        <title>Complete genome sequence of Haemophilus somnus (Histophilus somni) strain 129Pt and comparison to Haemophilus ducreyi 35000HP and Haemophilus influenzae Rd.</title>
        <authorList>
            <person name="Challacombe J.F."/>
            <person name="Duncan A.J."/>
            <person name="Brettin T.S."/>
            <person name="Bruce D."/>
            <person name="Chertkov O."/>
            <person name="Detter J.C."/>
            <person name="Han C.S."/>
            <person name="Misra M."/>
            <person name="Richardson P."/>
            <person name="Tapia R."/>
            <person name="Thayer N."/>
            <person name="Xie G."/>
            <person name="Inzana T.J."/>
        </authorList>
    </citation>
    <scope>NUCLEOTIDE SEQUENCE [LARGE SCALE GENOMIC DNA]</scope>
    <source>
        <strain>129Pt</strain>
    </source>
</reference>
<proteinExistence type="inferred from homology"/>
<evidence type="ECO:0000255" key="1">
    <source>
        <dbReference type="HAMAP-Rule" id="MF_00749"/>
    </source>
</evidence>
<evidence type="ECO:0000256" key="2">
    <source>
        <dbReference type="SAM" id="MobiDB-lite"/>
    </source>
</evidence>
<dbReference type="EMBL" id="CP000436">
    <property type="protein sequence ID" value="ABI25345.1"/>
    <property type="molecule type" value="Genomic_DNA"/>
</dbReference>
<dbReference type="SMR" id="Q0I476"/>
<dbReference type="KEGG" id="hso:HS_1070"/>
<dbReference type="eggNOG" id="COG3109">
    <property type="taxonomic scope" value="Bacteria"/>
</dbReference>
<dbReference type="HOGENOM" id="CLU_113254_0_0_6"/>
<dbReference type="GO" id="GO:0005829">
    <property type="term" value="C:cytosol"/>
    <property type="evidence" value="ECO:0007669"/>
    <property type="project" value="TreeGrafter"/>
</dbReference>
<dbReference type="GO" id="GO:0033592">
    <property type="term" value="F:RNA strand annealing activity"/>
    <property type="evidence" value="ECO:0007669"/>
    <property type="project" value="UniProtKB-UniRule"/>
</dbReference>
<dbReference type="GO" id="GO:0034057">
    <property type="term" value="F:RNA strand-exchange activity"/>
    <property type="evidence" value="ECO:0007669"/>
    <property type="project" value="UniProtKB-UniRule"/>
</dbReference>
<dbReference type="GO" id="GO:0010608">
    <property type="term" value="P:post-transcriptional regulation of gene expression"/>
    <property type="evidence" value="ECO:0007669"/>
    <property type="project" value="InterPro"/>
</dbReference>
<dbReference type="Gene3D" id="1.10.1710.10">
    <property type="entry name" value="ProQ/FinO domain"/>
    <property type="match status" value="1"/>
</dbReference>
<dbReference type="HAMAP" id="MF_00749">
    <property type="entry name" value="ProQ"/>
    <property type="match status" value="1"/>
</dbReference>
<dbReference type="InterPro" id="IPR023529">
    <property type="entry name" value="ProQ"/>
</dbReference>
<dbReference type="InterPro" id="IPR016103">
    <property type="entry name" value="ProQ/FinO"/>
</dbReference>
<dbReference type="InterPro" id="IPR036442">
    <property type="entry name" value="ProQ/FinO_sf"/>
</dbReference>
<dbReference type="InterPro" id="IPR035236">
    <property type="entry name" value="ProQ_C"/>
</dbReference>
<dbReference type="NCBIfam" id="NF003434">
    <property type="entry name" value="PRK04950.1"/>
    <property type="match status" value="1"/>
</dbReference>
<dbReference type="PANTHER" id="PTHR38106">
    <property type="entry name" value="RNA CHAPERONE PROQ"/>
    <property type="match status" value="1"/>
</dbReference>
<dbReference type="PANTHER" id="PTHR38106:SF1">
    <property type="entry name" value="RNA CHAPERONE PROQ"/>
    <property type="match status" value="1"/>
</dbReference>
<dbReference type="Pfam" id="PF04352">
    <property type="entry name" value="ProQ"/>
    <property type="match status" value="1"/>
</dbReference>
<dbReference type="Pfam" id="PF17516">
    <property type="entry name" value="ProQ_C"/>
    <property type="match status" value="1"/>
</dbReference>
<dbReference type="SMART" id="SM00945">
    <property type="entry name" value="ProQ"/>
    <property type="match status" value="1"/>
</dbReference>
<dbReference type="SUPFAM" id="SSF48657">
    <property type="entry name" value="FinO-like"/>
    <property type="match status" value="1"/>
</dbReference>
<organism>
    <name type="scientific">Histophilus somni (strain 129Pt)</name>
    <name type="common">Haemophilus somnus</name>
    <dbReference type="NCBI Taxonomy" id="205914"/>
    <lineage>
        <taxon>Bacteria</taxon>
        <taxon>Pseudomonadati</taxon>
        <taxon>Pseudomonadota</taxon>
        <taxon>Gammaproteobacteria</taxon>
        <taxon>Pasteurellales</taxon>
        <taxon>Pasteurellaceae</taxon>
        <taxon>Histophilus</taxon>
    </lineage>
</organism>